<name>LIPB_RICRO</name>
<dbReference type="EC" id="2.3.1.181" evidence="1"/>
<dbReference type="EMBL" id="CP000766">
    <property type="protein sequence ID" value="ABY73303.1"/>
    <property type="molecule type" value="Genomic_DNA"/>
</dbReference>
<dbReference type="RefSeq" id="WP_012151465.1">
    <property type="nucleotide sequence ID" value="NC_010263.3"/>
</dbReference>
<dbReference type="SMR" id="B0BVP3"/>
<dbReference type="GeneID" id="79937951"/>
<dbReference type="KEGG" id="rrj:RrIowa_1587"/>
<dbReference type="eggNOG" id="COG0321">
    <property type="taxonomic scope" value="Bacteria"/>
</dbReference>
<dbReference type="HOGENOM" id="CLU_035168_3_0_5"/>
<dbReference type="UniPathway" id="UPA00538">
    <property type="reaction ID" value="UER00592"/>
</dbReference>
<dbReference type="Proteomes" id="UP000000796">
    <property type="component" value="Chromosome"/>
</dbReference>
<dbReference type="GO" id="GO:0005737">
    <property type="term" value="C:cytoplasm"/>
    <property type="evidence" value="ECO:0007669"/>
    <property type="project" value="UniProtKB-SubCell"/>
</dbReference>
<dbReference type="GO" id="GO:0033819">
    <property type="term" value="F:lipoyl(octanoyl) transferase activity"/>
    <property type="evidence" value="ECO:0007669"/>
    <property type="project" value="UniProtKB-EC"/>
</dbReference>
<dbReference type="GO" id="GO:0036211">
    <property type="term" value="P:protein modification process"/>
    <property type="evidence" value="ECO:0007669"/>
    <property type="project" value="InterPro"/>
</dbReference>
<dbReference type="CDD" id="cd16444">
    <property type="entry name" value="LipB"/>
    <property type="match status" value="1"/>
</dbReference>
<dbReference type="Gene3D" id="3.30.930.10">
    <property type="entry name" value="Bira Bifunctional Protein, Domain 2"/>
    <property type="match status" value="1"/>
</dbReference>
<dbReference type="HAMAP" id="MF_00013">
    <property type="entry name" value="LipB"/>
    <property type="match status" value="1"/>
</dbReference>
<dbReference type="InterPro" id="IPR045864">
    <property type="entry name" value="aa-tRNA-synth_II/BPL/LPL"/>
</dbReference>
<dbReference type="InterPro" id="IPR004143">
    <property type="entry name" value="BPL_LPL_catalytic"/>
</dbReference>
<dbReference type="InterPro" id="IPR000544">
    <property type="entry name" value="Octanoyltransferase"/>
</dbReference>
<dbReference type="InterPro" id="IPR020605">
    <property type="entry name" value="Octanoyltransferase_CS"/>
</dbReference>
<dbReference type="NCBIfam" id="TIGR00214">
    <property type="entry name" value="lipB"/>
    <property type="match status" value="1"/>
</dbReference>
<dbReference type="NCBIfam" id="NF010921">
    <property type="entry name" value="PRK14341.1"/>
    <property type="match status" value="1"/>
</dbReference>
<dbReference type="NCBIfam" id="NF010925">
    <property type="entry name" value="PRK14345.1"/>
    <property type="match status" value="1"/>
</dbReference>
<dbReference type="PANTHER" id="PTHR10993:SF7">
    <property type="entry name" value="LIPOYLTRANSFERASE 2, MITOCHONDRIAL-RELATED"/>
    <property type="match status" value="1"/>
</dbReference>
<dbReference type="PANTHER" id="PTHR10993">
    <property type="entry name" value="OCTANOYLTRANSFERASE"/>
    <property type="match status" value="1"/>
</dbReference>
<dbReference type="Pfam" id="PF21948">
    <property type="entry name" value="LplA-B_cat"/>
    <property type="match status" value="1"/>
</dbReference>
<dbReference type="PIRSF" id="PIRSF016262">
    <property type="entry name" value="LPLase"/>
    <property type="match status" value="1"/>
</dbReference>
<dbReference type="SUPFAM" id="SSF55681">
    <property type="entry name" value="Class II aaRS and biotin synthetases"/>
    <property type="match status" value="1"/>
</dbReference>
<dbReference type="PROSITE" id="PS51733">
    <property type="entry name" value="BPL_LPL_CATALYTIC"/>
    <property type="match status" value="1"/>
</dbReference>
<dbReference type="PROSITE" id="PS01313">
    <property type="entry name" value="LIPB"/>
    <property type="match status" value="1"/>
</dbReference>
<organism>
    <name type="scientific">Rickettsia rickettsii (strain Iowa)</name>
    <dbReference type="NCBI Taxonomy" id="452659"/>
    <lineage>
        <taxon>Bacteria</taxon>
        <taxon>Pseudomonadati</taxon>
        <taxon>Pseudomonadota</taxon>
        <taxon>Alphaproteobacteria</taxon>
        <taxon>Rickettsiales</taxon>
        <taxon>Rickettsiaceae</taxon>
        <taxon>Rickettsieae</taxon>
        <taxon>Rickettsia</taxon>
        <taxon>spotted fever group</taxon>
    </lineage>
</organism>
<evidence type="ECO:0000255" key="1">
    <source>
        <dbReference type="HAMAP-Rule" id="MF_00013"/>
    </source>
</evidence>
<evidence type="ECO:0000255" key="2">
    <source>
        <dbReference type="PROSITE-ProRule" id="PRU01067"/>
    </source>
</evidence>
<keyword id="KW-0012">Acyltransferase</keyword>
<keyword id="KW-0963">Cytoplasm</keyword>
<keyword id="KW-0808">Transferase</keyword>
<sequence>MIRFITIPDFADYQVILKLMEDYVNKVINDHEPEIIYLVEHSEVYTAGTNYKQEELLNYGDIPVIYTGRGGKFTFHGPGQRVIYPILNLDSPNRYKDLKLYIKMLEEWIINSLNYFGIKAYIIKDKVGIWVKVRKDEFAKIAAIGVRVRKWVTYHGVAINISTDLSKFSGIIPCGLENSLVTSLNQLGIHVEMSEFDKIIQTEFNKIFK</sequence>
<reference key="1">
    <citation type="journal article" date="2008" name="Infect. Immun.">
        <title>Genomic comparison of virulent Rickettsia rickettsii Sheila Smith and avirulent Rickettsia rickettsii Iowa.</title>
        <authorList>
            <person name="Ellison D.W."/>
            <person name="Clark T.R."/>
            <person name="Sturdevant D.E."/>
            <person name="Virtaneva K."/>
            <person name="Porcella S.F."/>
            <person name="Hackstadt T."/>
        </authorList>
    </citation>
    <scope>NUCLEOTIDE SEQUENCE [LARGE SCALE GENOMIC DNA]</scope>
    <source>
        <strain>Iowa</strain>
    </source>
</reference>
<gene>
    <name evidence="1" type="primary">lipB</name>
    <name type="ordered locus">RrIowa_1587</name>
</gene>
<comment type="function">
    <text evidence="1">Catalyzes the transfer of endogenously produced octanoic acid from octanoyl-acyl-carrier-protein onto the lipoyl domains of lipoate-dependent enzymes. Lipoyl-ACP can also act as a substrate although octanoyl-ACP is likely to be the physiological substrate.</text>
</comment>
<comment type="catalytic activity">
    <reaction evidence="1">
        <text>octanoyl-[ACP] + L-lysyl-[protein] = N(6)-octanoyl-L-lysyl-[protein] + holo-[ACP] + H(+)</text>
        <dbReference type="Rhea" id="RHEA:17665"/>
        <dbReference type="Rhea" id="RHEA-COMP:9636"/>
        <dbReference type="Rhea" id="RHEA-COMP:9685"/>
        <dbReference type="Rhea" id="RHEA-COMP:9752"/>
        <dbReference type="Rhea" id="RHEA-COMP:9928"/>
        <dbReference type="ChEBI" id="CHEBI:15378"/>
        <dbReference type="ChEBI" id="CHEBI:29969"/>
        <dbReference type="ChEBI" id="CHEBI:64479"/>
        <dbReference type="ChEBI" id="CHEBI:78463"/>
        <dbReference type="ChEBI" id="CHEBI:78809"/>
        <dbReference type="EC" id="2.3.1.181"/>
    </reaction>
</comment>
<comment type="pathway">
    <text evidence="1">Protein modification; protein lipoylation via endogenous pathway; protein N(6)-(lipoyl)lysine from octanoyl-[acyl-carrier-protein]: step 1/2.</text>
</comment>
<comment type="subcellular location">
    <subcellularLocation>
        <location evidence="1">Cytoplasm</location>
    </subcellularLocation>
</comment>
<comment type="miscellaneous">
    <text evidence="1">In the reaction, the free carboxyl group of octanoic acid is attached via an amide linkage to the epsilon-amino group of a specific lysine residue of lipoyl domains of lipoate-dependent enzymes.</text>
</comment>
<comment type="similarity">
    <text evidence="1">Belongs to the LipB family.</text>
</comment>
<protein>
    <recommendedName>
        <fullName evidence="1">Octanoyltransferase</fullName>
        <ecNumber evidence="1">2.3.1.181</ecNumber>
    </recommendedName>
    <alternativeName>
        <fullName evidence="1">Lipoate-protein ligase B</fullName>
    </alternativeName>
    <alternativeName>
        <fullName evidence="1">Lipoyl/octanoyl transferase</fullName>
    </alternativeName>
    <alternativeName>
        <fullName evidence="1">Octanoyl-[acyl-carrier-protein]-protein N-octanoyltransferase</fullName>
    </alternativeName>
</protein>
<accession>B0BVP3</accession>
<proteinExistence type="inferred from homology"/>
<feature type="chain" id="PRO_1000074011" description="Octanoyltransferase">
    <location>
        <begin position="1"/>
        <end position="209"/>
    </location>
</feature>
<feature type="domain" description="BPL/LPL catalytic" evidence="2">
    <location>
        <begin position="30"/>
        <end position="209"/>
    </location>
</feature>
<feature type="active site" description="Acyl-thioester intermediate" evidence="1">
    <location>
        <position position="174"/>
    </location>
</feature>
<feature type="binding site" evidence="1">
    <location>
        <begin position="69"/>
        <end position="76"/>
    </location>
    <ligand>
        <name>substrate</name>
    </ligand>
</feature>
<feature type="binding site" evidence="1">
    <location>
        <begin position="143"/>
        <end position="145"/>
    </location>
    <ligand>
        <name>substrate</name>
    </ligand>
</feature>
<feature type="binding site" evidence="1">
    <location>
        <begin position="156"/>
        <end position="158"/>
    </location>
    <ligand>
        <name>substrate</name>
    </ligand>
</feature>
<feature type="site" description="Lowers pKa of active site Cys" evidence="1">
    <location>
        <position position="140"/>
    </location>
</feature>